<organism>
    <name type="scientific">Anaeromyxobacter sp. (strain K)</name>
    <dbReference type="NCBI Taxonomy" id="447217"/>
    <lineage>
        <taxon>Bacteria</taxon>
        <taxon>Pseudomonadati</taxon>
        <taxon>Myxococcota</taxon>
        <taxon>Myxococcia</taxon>
        <taxon>Myxococcales</taxon>
        <taxon>Cystobacterineae</taxon>
        <taxon>Anaeromyxobacteraceae</taxon>
        <taxon>Anaeromyxobacter</taxon>
    </lineage>
</organism>
<comment type="function">
    <text evidence="1">Specifically methylates guanosine-37 in various tRNAs.</text>
</comment>
<comment type="catalytic activity">
    <reaction evidence="1">
        <text>guanosine(37) in tRNA + S-adenosyl-L-methionine = N(1)-methylguanosine(37) in tRNA + S-adenosyl-L-homocysteine + H(+)</text>
        <dbReference type="Rhea" id="RHEA:36899"/>
        <dbReference type="Rhea" id="RHEA-COMP:10145"/>
        <dbReference type="Rhea" id="RHEA-COMP:10147"/>
        <dbReference type="ChEBI" id="CHEBI:15378"/>
        <dbReference type="ChEBI" id="CHEBI:57856"/>
        <dbReference type="ChEBI" id="CHEBI:59789"/>
        <dbReference type="ChEBI" id="CHEBI:73542"/>
        <dbReference type="ChEBI" id="CHEBI:74269"/>
        <dbReference type="EC" id="2.1.1.228"/>
    </reaction>
</comment>
<comment type="subunit">
    <text evidence="1">Homodimer.</text>
</comment>
<comment type="subcellular location">
    <subcellularLocation>
        <location evidence="1">Cytoplasm</location>
    </subcellularLocation>
</comment>
<comment type="similarity">
    <text evidence="1">Belongs to the RNA methyltransferase TrmD family.</text>
</comment>
<protein>
    <recommendedName>
        <fullName evidence="1">tRNA (guanine-N(1)-)-methyltransferase</fullName>
        <ecNumber evidence="1">2.1.1.228</ecNumber>
    </recommendedName>
    <alternativeName>
        <fullName evidence="1">M1G-methyltransferase</fullName>
    </alternativeName>
    <alternativeName>
        <fullName evidence="1">tRNA [GM37] methyltransferase</fullName>
    </alternativeName>
</protein>
<gene>
    <name evidence="1" type="primary">trmD</name>
    <name type="ordered locus">AnaeK_1966</name>
</gene>
<feature type="chain" id="PRO_1000130128" description="tRNA (guanine-N(1)-)-methyltransferase">
    <location>
        <begin position="1"/>
        <end position="247"/>
    </location>
</feature>
<feature type="binding site" evidence="1">
    <location>
        <position position="115"/>
    </location>
    <ligand>
        <name>S-adenosyl-L-methionine</name>
        <dbReference type="ChEBI" id="CHEBI:59789"/>
    </ligand>
</feature>
<feature type="binding site" evidence="1">
    <location>
        <begin position="134"/>
        <end position="139"/>
    </location>
    <ligand>
        <name>S-adenosyl-L-methionine</name>
        <dbReference type="ChEBI" id="CHEBI:59789"/>
    </ligand>
</feature>
<accession>B4UBD2</accession>
<name>TRMD_ANASK</name>
<sequence>MARLEVDILTLFPRMCAGYLGESILGKAQEAGLLAATITDIRDHATGKHRVCDDAPYGGGAGMVMKPEPLVEAIEAARARLPGAWVVLTSPRGARLDQALARRFAEHGRLILVCGRYEGVDERVMTAVDMQVSIGDFVLTGGELAALCVVDAAARLVPGVLGNAASADAESFAGVEGLLEHPQYTRPPEFRGMKVPEVLLSGDHRRIERWRRREALRATRERRPDLFARLSLPESDLRLIEAGDDEL</sequence>
<dbReference type="EC" id="2.1.1.228" evidence="1"/>
<dbReference type="EMBL" id="CP001131">
    <property type="protein sequence ID" value="ACG73194.1"/>
    <property type="molecule type" value="Genomic_DNA"/>
</dbReference>
<dbReference type="RefSeq" id="WP_012525996.1">
    <property type="nucleotide sequence ID" value="NC_011145.1"/>
</dbReference>
<dbReference type="SMR" id="B4UBD2"/>
<dbReference type="KEGG" id="ank:AnaeK_1966"/>
<dbReference type="HOGENOM" id="CLU_047363_0_1_7"/>
<dbReference type="OrthoDB" id="9807416at2"/>
<dbReference type="Proteomes" id="UP000001871">
    <property type="component" value="Chromosome"/>
</dbReference>
<dbReference type="GO" id="GO:0005829">
    <property type="term" value="C:cytosol"/>
    <property type="evidence" value="ECO:0007669"/>
    <property type="project" value="TreeGrafter"/>
</dbReference>
<dbReference type="GO" id="GO:0052906">
    <property type="term" value="F:tRNA (guanine(37)-N1)-methyltransferase activity"/>
    <property type="evidence" value="ECO:0007669"/>
    <property type="project" value="UniProtKB-UniRule"/>
</dbReference>
<dbReference type="GO" id="GO:0002939">
    <property type="term" value="P:tRNA N1-guanine methylation"/>
    <property type="evidence" value="ECO:0007669"/>
    <property type="project" value="TreeGrafter"/>
</dbReference>
<dbReference type="CDD" id="cd18080">
    <property type="entry name" value="TrmD-like"/>
    <property type="match status" value="1"/>
</dbReference>
<dbReference type="FunFam" id="1.10.1270.20:FF:000001">
    <property type="entry name" value="tRNA (guanine-N(1)-)-methyltransferase"/>
    <property type="match status" value="1"/>
</dbReference>
<dbReference type="FunFam" id="3.40.1280.10:FF:000001">
    <property type="entry name" value="tRNA (guanine-N(1)-)-methyltransferase"/>
    <property type="match status" value="1"/>
</dbReference>
<dbReference type="Gene3D" id="3.40.1280.10">
    <property type="match status" value="1"/>
</dbReference>
<dbReference type="Gene3D" id="1.10.1270.20">
    <property type="entry name" value="tRNA(m1g37)methyltransferase, domain 2"/>
    <property type="match status" value="1"/>
</dbReference>
<dbReference type="HAMAP" id="MF_00605">
    <property type="entry name" value="TrmD"/>
    <property type="match status" value="1"/>
</dbReference>
<dbReference type="InterPro" id="IPR029028">
    <property type="entry name" value="Alpha/beta_knot_MTases"/>
</dbReference>
<dbReference type="InterPro" id="IPR023148">
    <property type="entry name" value="tRNA_m1G_MeTrfase_C_sf"/>
</dbReference>
<dbReference type="InterPro" id="IPR002649">
    <property type="entry name" value="tRNA_m1G_MeTrfase_TrmD"/>
</dbReference>
<dbReference type="InterPro" id="IPR029026">
    <property type="entry name" value="tRNA_m1G_MTases_N"/>
</dbReference>
<dbReference type="InterPro" id="IPR016009">
    <property type="entry name" value="tRNA_MeTrfase_TRMD/TRM10"/>
</dbReference>
<dbReference type="NCBIfam" id="NF000648">
    <property type="entry name" value="PRK00026.1"/>
    <property type="match status" value="1"/>
</dbReference>
<dbReference type="NCBIfam" id="TIGR00088">
    <property type="entry name" value="trmD"/>
    <property type="match status" value="1"/>
</dbReference>
<dbReference type="PANTHER" id="PTHR46417">
    <property type="entry name" value="TRNA (GUANINE-N(1)-)-METHYLTRANSFERASE"/>
    <property type="match status" value="1"/>
</dbReference>
<dbReference type="PANTHER" id="PTHR46417:SF1">
    <property type="entry name" value="TRNA (GUANINE-N(1)-)-METHYLTRANSFERASE"/>
    <property type="match status" value="1"/>
</dbReference>
<dbReference type="Pfam" id="PF01746">
    <property type="entry name" value="tRNA_m1G_MT"/>
    <property type="match status" value="1"/>
</dbReference>
<dbReference type="PIRSF" id="PIRSF000386">
    <property type="entry name" value="tRNA_mtase"/>
    <property type="match status" value="1"/>
</dbReference>
<dbReference type="SUPFAM" id="SSF75217">
    <property type="entry name" value="alpha/beta knot"/>
    <property type="match status" value="1"/>
</dbReference>
<evidence type="ECO:0000255" key="1">
    <source>
        <dbReference type="HAMAP-Rule" id="MF_00605"/>
    </source>
</evidence>
<proteinExistence type="inferred from homology"/>
<reference key="1">
    <citation type="submission" date="2008-08" db="EMBL/GenBank/DDBJ databases">
        <title>Complete sequence of Anaeromyxobacter sp. K.</title>
        <authorList>
            <consortium name="US DOE Joint Genome Institute"/>
            <person name="Lucas S."/>
            <person name="Copeland A."/>
            <person name="Lapidus A."/>
            <person name="Glavina del Rio T."/>
            <person name="Dalin E."/>
            <person name="Tice H."/>
            <person name="Bruce D."/>
            <person name="Goodwin L."/>
            <person name="Pitluck S."/>
            <person name="Saunders E."/>
            <person name="Brettin T."/>
            <person name="Detter J.C."/>
            <person name="Han C."/>
            <person name="Larimer F."/>
            <person name="Land M."/>
            <person name="Hauser L."/>
            <person name="Kyrpides N."/>
            <person name="Ovchinnikiva G."/>
            <person name="Beliaev A."/>
        </authorList>
    </citation>
    <scope>NUCLEOTIDE SEQUENCE [LARGE SCALE GENOMIC DNA]</scope>
    <source>
        <strain>K</strain>
    </source>
</reference>
<keyword id="KW-0963">Cytoplasm</keyword>
<keyword id="KW-0489">Methyltransferase</keyword>
<keyword id="KW-0949">S-adenosyl-L-methionine</keyword>
<keyword id="KW-0808">Transferase</keyword>
<keyword id="KW-0819">tRNA processing</keyword>